<organism>
    <name type="scientific">Listeria innocua serovar 6a (strain ATCC BAA-680 / CLIP 11262)</name>
    <dbReference type="NCBI Taxonomy" id="272626"/>
    <lineage>
        <taxon>Bacteria</taxon>
        <taxon>Bacillati</taxon>
        <taxon>Bacillota</taxon>
        <taxon>Bacilli</taxon>
        <taxon>Bacillales</taxon>
        <taxon>Listeriaceae</taxon>
        <taxon>Listeria</taxon>
    </lineage>
</organism>
<proteinExistence type="inferred from homology"/>
<name>Y1050_LISIN</name>
<feature type="chain" id="PRO_0000216681" description="UPF0223 protein lin1050">
    <location>
        <begin position="1"/>
        <end position="90"/>
    </location>
</feature>
<evidence type="ECO:0000255" key="1">
    <source>
        <dbReference type="HAMAP-Rule" id="MF_01041"/>
    </source>
</evidence>
<accession>P67357</accession>
<accession>Q92CX1</accession>
<comment type="similarity">
    <text evidence="1">Belongs to the UPF0223 family.</text>
</comment>
<reference key="1">
    <citation type="journal article" date="2001" name="Science">
        <title>Comparative genomics of Listeria species.</title>
        <authorList>
            <person name="Glaser P."/>
            <person name="Frangeul L."/>
            <person name="Buchrieser C."/>
            <person name="Rusniok C."/>
            <person name="Amend A."/>
            <person name="Baquero F."/>
            <person name="Berche P."/>
            <person name="Bloecker H."/>
            <person name="Brandt P."/>
            <person name="Chakraborty T."/>
            <person name="Charbit A."/>
            <person name="Chetouani F."/>
            <person name="Couve E."/>
            <person name="de Daruvar A."/>
            <person name="Dehoux P."/>
            <person name="Domann E."/>
            <person name="Dominguez-Bernal G."/>
            <person name="Duchaud E."/>
            <person name="Durant L."/>
            <person name="Dussurget O."/>
            <person name="Entian K.-D."/>
            <person name="Fsihi H."/>
            <person name="Garcia-del Portillo F."/>
            <person name="Garrido P."/>
            <person name="Gautier L."/>
            <person name="Goebel W."/>
            <person name="Gomez-Lopez N."/>
            <person name="Hain T."/>
            <person name="Hauf J."/>
            <person name="Jackson D."/>
            <person name="Jones L.-M."/>
            <person name="Kaerst U."/>
            <person name="Kreft J."/>
            <person name="Kuhn M."/>
            <person name="Kunst F."/>
            <person name="Kurapkat G."/>
            <person name="Madueno E."/>
            <person name="Maitournam A."/>
            <person name="Mata Vicente J."/>
            <person name="Ng E."/>
            <person name="Nedjari H."/>
            <person name="Nordsiek G."/>
            <person name="Novella S."/>
            <person name="de Pablos B."/>
            <person name="Perez-Diaz J.-C."/>
            <person name="Purcell R."/>
            <person name="Remmel B."/>
            <person name="Rose M."/>
            <person name="Schlueter T."/>
            <person name="Simoes N."/>
            <person name="Tierrez A."/>
            <person name="Vazquez-Boland J.-A."/>
            <person name="Voss H."/>
            <person name="Wehland J."/>
            <person name="Cossart P."/>
        </authorList>
    </citation>
    <scope>NUCLEOTIDE SEQUENCE [LARGE SCALE GENOMIC DNA]</scope>
    <source>
        <strain>ATCC BAA-680 / CLIP 11262</strain>
    </source>
</reference>
<dbReference type="EMBL" id="AL596167">
    <property type="protein sequence ID" value="CAC96281.1"/>
    <property type="molecule type" value="Genomic_DNA"/>
</dbReference>
<dbReference type="PIR" id="AI1563">
    <property type="entry name" value="AI1563"/>
</dbReference>
<dbReference type="RefSeq" id="WP_003722685.1">
    <property type="nucleotide sequence ID" value="NC_003212.1"/>
</dbReference>
<dbReference type="SMR" id="P67357"/>
<dbReference type="STRING" id="272626.gene:17565380"/>
<dbReference type="KEGG" id="lin:lin1050"/>
<dbReference type="eggNOG" id="COG4476">
    <property type="taxonomic scope" value="Bacteria"/>
</dbReference>
<dbReference type="HOGENOM" id="CLU_166693_1_0_9"/>
<dbReference type="OrthoDB" id="1649074at2"/>
<dbReference type="Proteomes" id="UP000002513">
    <property type="component" value="Chromosome"/>
</dbReference>
<dbReference type="Gene3D" id="1.10.220.80">
    <property type="entry name" value="BH2638-like"/>
    <property type="match status" value="1"/>
</dbReference>
<dbReference type="HAMAP" id="MF_01041">
    <property type="entry name" value="UPF0223"/>
    <property type="match status" value="1"/>
</dbReference>
<dbReference type="InterPro" id="IPR023324">
    <property type="entry name" value="BH2638-like_sf"/>
</dbReference>
<dbReference type="InterPro" id="IPR007920">
    <property type="entry name" value="UPF0223"/>
</dbReference>
<dbReference type="NCBIfam" id="NF003353">
    <property type="entry name" value="PRK04387.1"/>
    <property type="match status" value="1"/>
</dbReference>
<dbReference type="Pfam" id="PF05256">
    <property type="entry name" value="UPF0223"/>
    <property type="match status" value="1"/>
</dbReference>
<dbReference type="PIRSF" id="PIRSF037260">
    <property type="entry name" value="UPF0223"/>
    <property type="match status" value="1"/>
</dbReference>
<dbReference type="SUPFAM" id="SSF158504">
    <property type="entry name" value="BH2638-like"/>
    <property type="match status" value="1"/>
</dbReference>
<sequence>MEYSYPLNPDWTTEEMTIVVQFLEAIERAYEKGIDTLELKEKYRAFKQVVPAKGEEKRIGIDFEKASGYSAYKVMQLVKNATTSKIKMQP</sequence>
<gene>
    <name type="ordered locus">lin1050</name>
</gene>
<protein>
    <recommendedName>
        <fullName evidence="1">UPF0223 protein lin1050</fullName>
    </recommendedName>
</protein>